<dbReference type="EMBL" id="AE017226">
    <property type="protein sequence ID" value="AAS12995.1"/>
    <property type="molecule type" value="Genomic_DNA"/>
</dbReference>
<dbReference type="RefSeq" id="NP_973076.1">
    <property type="nucleotide sequence ID" value="NC_002967.9"/>
</dbReference>
<dbReference type="RefSeq" id="WP_002680446.1">
    <property type="nucleotide sequence ID" value="NC_002967.9"/>
</dbReference>
<dbReference type="SMR" id="Q73JT1"/>
<dbReference type="STRING" id="243275.TDE_2478"/>
<dbReference type="PaxDb" id="243275-TDE_2478"/>
<dbReference type="GeneID" id="2741451"/>
<dbReference type="KEGG" id="tde:TDE_2478"/>
<dbReference type="PATRIC" id="fig|243275.7.peg.2344"/>
<dbReference type="eggNOG" id="COG0322">
    <property type="taxonomic scope" value="Bacteria"/>
</dbReference>
<dbReference type="HOGENOM" id="CLU_014841_3_2_12"/>
<dbReference type="OrthoDB" id="9804933at2"/>
<dbReference type="Proteomes" id="UP000008212">
    <property type="component" value="Chromosome"/>
</dbReference>
<dbReference type="GO" id="GO:0005737">
    <property type="term" value="C:cytoplasm"/>
    <property type="evidence" value="ECO:0007669"/>
    <property type="project" value="UniProtKB-SubCell"/>
</dbReference>
<dbReference type="GO" id="GO:0009380">
    <property type="term" value="C:excinuclease repair complex"/>
    <property type="evidence" value="ECO:0007669"/>
    <property type="project" value="InterPro"/>
</dbReference>
<dbReference type="GO" id="GO:0003677">
    <property type="term" value="F:DNA binding"/>
    <property type="evidence" value="ECO:0007669"/>
    <property type="project" value="UniProtKB-UniRule"/>
</dbReference>
<dbReference type="GO" id="GO:0009381">
    <property type="term" value="F:excinuclease ABC activity"/>
    <property type="evidence" value="ECO:0007669"/>
    <property type="project" value="UniProtKB-UniRule"/>
</dbReference>
<dbReference type="GO" id="GO:0006289">
    <property type="term" value="P:nucleotide-excision repair"/>
    <property type="evidence" value="ECO:0007669"/>
    <property type="project" value="UniProtKB-UniRule"/>
</dbReference>
<dbReference type="GO" id="GO:0009432">
    <property type="term" value="P:SOS response"/>
    <property type="evidence" value="ECO:0007669"/>
    <property type="project" value="UniProtKB-UniRule"/>
</dbReference>
<dbReference type="CDD" id="cd10434">
    <property type="entry name" value="GIY-YIG_UvrC_Cho"/>
    <property type="match status" value="1"/>
</dbReference>
<dbReference type="FunFam" id="3.40.1440.10:FF:000001">
    <property type="entry name" value="UvrABC system protein C"/>
    <property type="match status" value="1"/>
</dbReference>
<dbReference type="Gene3D" id="1.10.150.20">
    <property type="entry name" value="5' to 3' exonuclease, C-terminal subdomain"/>
    <property type="match status" value="1"/>
</dbReference>
<dbReference type="Gene3D" id="3.40.1440.10">
    <property type="entry name" value="GIY-YIG endonuclease"/>
    <property type="match status" value="1"/>
</dbReference>
<dbReference type="Gene3D" id="4.10.860.10">
    <property type="entry name" value="UVR domain"/>
    <property type="match status" value="1"/>
</dbReference>
<dbReference type="Gene3D" id="3.30.420.340">
    <property type="entry name" value="UvrC, RNAse H endonuclease domain"/>
    <property type="match status" value="1"/>
</dbReference>
<dbReference type="HAMAP" id="MF_00203">
    <property type="entry name" value="UvrC"/>
    <property type="match status" value="1"/>
</dbReference>
<dbReference type="InterPro" id="IPR000305">
    <property type="entry name" value="GIY-YIG_endonuc"/>
</dbReference>
<dbReference type="InterPro" id="IPR035901">
    <property type="entry name" value="GIY-YIG_endonuc_sf"/>
</dbReference>
<dbReference type="InterPro" id="IPR047296">
    <property type="entry name" value="GIY-YIG_UvrC_Cho"/>
</dbReference>
<dbReference type="InterPro" id="IPR010994">
    <property type="entry name" value="RuvA_2-like"/>
</dbReference>
<dbReference type="InterPro" id="IPR001943">
    <property type="entry name" value="UVR_dom"/>
</dbReference>
<dbReference type="InterPro" id="IPR036876">
    <property type="entry name" value="UVR_dom_sf"/>
</dbReference>
<dbReference type="InterPro" id="IPR050066">
    <property type="entry name" value="UvrABC_protein_C"/>
</dbReference>
<dbReference type="InterPro" id="IPR004791">
    <property type="entry name" value="UvrC"/>
</dbReference>
<dbReference type="InterPro" id="IPR001162">
    <property type="entry name" value="UvrC_RNase_H_dom"/>
</dbReference>
<dbReference type="InterPro" id="IPR038476">
    <property type="entry name" value="UvrC_RNase_H_dom_sf"/>
</dbReference>
<dbReference type="NCBIfam" id="TIGR00194">
    <property type="entry name" value="uvrC"/>
    <property type="match status" value="1"/>
</dbReference>
<dbReference type="PANTHER" id="PTHR30562:SF1">
    <property type="entry name" value="UVRABC SYSTEM PROTEIN C"/>
    <property type="match status" value="1"/>
</dbReference>
<dbReference type="PANTHER" id="PTHR30562">
    <property type="entry name" value="UVRC/OXIDOREDUCTASE"/>
    <property type="match status" value="1"/>
</dbReference>
<dbReference type="Pfam" id="PF01541">
    <property type="entry name" value="GIY-YIG"/>
    <property type="match status" value="1"/>
</dbReference>
<dbReference type="Pfam" id="PF14520">
    <property type="entry name" value="HHH_5"/>
    <property type="match status" value="1"/>
</dbReference>
<dbReference type="Pfam" id="PF02151">
    <property type="entry name" value="UVR"/>
    <property type="match status" value="1"/>
</dbReference>
<dbReference type="Pfam" id="PF22920">
    <property type="entry name" value="UvrC_RNaseH"/>
    <property type="match status" value="1"/>
</dbReference>
<dbReference type="Pfam" id="PF08459">
    <property type="entry name" value="UvrC_RNaseH_dom"/>
    <property type="match status" value="1"/>
</dbReference>
<dbReference type="SMART" id="SM00465">
    <property type="entry name" value="GIYc"/>
    <property type="match status" value="1"/>
</dbReference>
<dbReference type="SUPFAM" id="SSF46600">
    <property type="entry name" value="C-terminal UvrC-binding domain of UvrB"/>
    <property type="match status" value="1"/>
</dbReference>
<dbReference type="SUPFAM" id="SSF82771">
    <property type="entry name" value="GIY-YIG endonuclease"/>
    <property type="match status" value="1"/>
</dbReference>
<dbReference type="SUPFAM" id="SSF47781">
    <property type="entry name" value="RuvA domain 2-like"/>
    <property type="match status" value="1"/>
</dbReference>
<dbReference type="PROSITE" id="PS50164">
    <property type="entry name" value="GIY_YIG"/>
    <property type="match status" value="1"/>
</dbReference>
<dbReference type="PROSITE" id="PS50151">
    <property type="entry name" value="UVR"/>
    <property type="match status" value="1"/>
</dbReference>
<dbReference type="PROSITE" id="PS50165">
    <property type="entry name" value="UVRC"/>
    <property type="match status" value="1"/>
</dbReference>
<accession>Q73JT1</accession>
<gene>
    <name evidence="1" type="primary">uvrC</name>
    <name type="ordered locus">TDE_2478</name>
</gene>
<reference key="1">
    <citation type="journal article" date="2004" name="Proc. Natl. Acad. Sci. U.S.A.">
        <title>Comparison of the genome of the oral pathogen Treponema denticola with other spirochete genomes.</title>
        <authorList>
            <person name="Seshadri R."/>
            <person name="Myers G.S.A."/>
            <person name="Tettelin H."/>
            <person name="Eisen J.A."/>
            <person name="Heidelberg J.F."/>
            <person name="Dodson R.J."/>
            <person name="Davidsen T.M."/>
            <person name="DeBoy R.T."/>
            <person name="Fouts D.E."/>
            <person name="Haft D.H."/>
            <person name="Selengut J."/>
            <person name="Ren Q."/>
            <person name="Brinkac L.M."/>
            <person name="Madupu R."/>
            <person name="Kolonay J.F."/>
            <person name="Durkin S.A."/>
            <person name="Daugherty S.C."/>
            <person name="Shetty J."/>
            <person name="Shvartsbeyn A."/>
            <person name="Gebregeorgis E."/>
            <person name="Geer K."/>
            <person name="Tsegaye G."/>
            <person name="Malek J.A."/>
            <person name="Ayodeji B."/>
            <person name="Shatsman S."/>
            <person name="McLeod M.P."/>
            <person name="Smajs D."/>
            <person name="Howell J.K."/>
            <person name="Pal S."/>
            <person name="Amin A."/>
            <person name="Vashisth P."/>
            <person name="McNeill T.Z."/>
            <person name="Xiang Q."/>
            <person name="Sodergren E."/>
            <person name="Baca E."/>
            <person name="Weinstock G.M."/>
            <person name="Norris S.J."/>
            <person name="Fraser C.M."/>
            <person name="Paulsen I.T."/>
        </authorList>
    </citation>
    <scope>NUCLEOTIDE SEQUENCE [LARGE SCALE GENOMIC DNA]</scope>
    <source>
        <strain>ATCC 35405 / DSM 14222 / CIP 103919 / JCM 8153 / KCTC 15104</strain>
    </source>
</reference>
<sequence>MAEITTREKLHEVALSAPKTSGVYLWKDKAGTVIYVGKAKSLKNRLSSYFTSNRDIKTRILVSRAESIEYIQTENEYEALLLENTLIKKHKPRYNINLKDGKTYPVLKLTNEEFPKVYRTRNIKNDGSKYFGPFPNVSAVDMFLTLIKHNYTLRQCKQLKKRETPCLYFHIGRCKAPCCGKISAEEYGKDIEEITLLLEGEMEDVSGTLKEKMKEAAEKKEFEKAARLRDGIQAVYALRGQNIVQDMDPESRDYIAWAFEGAMVSIAVLKMRNGRLVGRDLYRSHSLKEEGEILSEFISAYYTSANEVPPKIFIPQAAEGNALIEKWLNEELHAKTRISIIPLEKESLAAEERSAADSLTEIEEAASKTIGYAVKEPAPLSAQEEKLNLSPAEIKHHKAALKMARFNAKEDAMRRLREQGDFAAVEDLQKRLNLPCLPQRIEGFDIAHLGGTFTVAALISFKEGNPDKKNYRIFRLKNTDGVIDDYASMREVIARRYTRLLNEGADLPDLILIDGGIGQVNAASKIVDALDLGIPVIGLAEKNEEVYFPHNSKPVILPRRSDALRLLQRIRDEAHRFSNTRNNKLRRANKLKTEFENLPHIGKKRAHVLLKAFGSTENLKTLTAQALSETAKISLKQAEEVLDAVKTTNNNN</sequence>
<feature type="chain" id="PRO_0000227488" description="UvrABC system protein C">
    <location>
        <begin position="1"/>
        <end position="652"/>
    </location>
</feature>
<feature type="domain" description="GIY-YIG" evidence="1">
    <location>
        <begin position="19"/>
        <end position="96"/>
    </location>
</feature>
<feature type="domain" description="UVR" evidence="1">
    <location>
        <begin position="203"/>
        <end position="238"/>
    </location>
</feature>
<proteinExistence type="inferred from homology"/>
<keyword id="KW-0963">Cytoplasm</keyword>
<keyword id="KW-0227">DNA damage</keyword>
<keyword id="KW-0228">DNA excision</keyword>
<keyword id="KW-0234">DNA repair</keyword>
<keyword id="KW-0267">Excision nuclease</keyword>
<keyword id="KW-1185">Reference proteome</keyword>
<keyword id="KW-0742">SOS response</keyword>
<evidence type="ECO:0000255" key="1">
    <source>
        <dbReference type="HAMAP-Rule" id="MF_00203"/>
    </source>
</evidence>
<protein>
    <recommendedName>
        <fullName evidence="1">UvrABC system protein C</fullName>
        <shortName evidence="1">Protein UvrC</shortName>
    </recommendedName>
    <alternativeName>
        <fullName evidence="1">Excinuclease ABC subunit C</fullName>
    </alternativeName>
</protein>
<comment type="function">
    <text evidence="1">The UvrABC repair system catalyzes the recognition and processing of DNA lesions. UvrC both incises the 5' and 3' sides of the lesion. The N-terminal half is responsible for the 3' incision and the C-terminal half is responsible for the 5' incision.</text>
</comment>
<comment type="subunit">
    <text evidence="1">Interacts with UvrB in an incision complex.</text>
</comment>
<comment type="subcellular location">
    <subcellularLocation>
        <location evidence="1">Cytoplasm</location>
    </subcellularLocation>
</comment>
<comment type="similarity">
    <text evidence="1">Belongs to the UvrC family.</text>
</comment>
<organism>
    <name type="scientific">Treponema denticola (strain ATCC 35405 / DSM 14222 / CIP 103919 / JCM 8153 / KCTC 15104)</name>
    <dbReference type="NCBI Taxonomy" id="243275"/>
    <lineage>
        <taxon>Bacteria</taxon>
        <taxon>Pseudomonadati</taxon>
        <taxon>Spirochaetota</taxon>
        <taxon>Spirochaetia</taxon>
        <taxon>Spirochaetales</taxon>
        <taxon>Treponemataceae</taxon>
        <taxon>Treponema</taxon>
    </lineage>
</organism>
<name>UVRC_TREDE</name>